<name>RL18_RHOPA</name>
<dbReference type="EMBL" id="BX572603">
    <property type="protein sequence ID" value="CAE28675.1"/>
    <property type="molecule type" value="Genomic_DNA"/>
</dbReference>
<dbReference type="RefSeq" id="WP_011158779.1">
    <property type="nucleotide sequence ID" value="NZ_CP116810.1"/>
</dbReference>
<dbReference type="SMR" id="Q6N4U9"/>
<dbReference type="IntAct" id="Q6N4U9">
    <property type="interactions" value="1"/>
</dbReference>
<dbReference type="STRING" id="258594.RPA3234"/>
<dbReference type="GeneID" id="66894320"/>
<dbReference type="eggNOG" id="COG0256">
    <property type="taxonomic scope" value="Bacteria"/>
</dbReference>
<dbReference type="HOGENOM" id="CLU_098841_0_1_5"/>
<dbReference type="PhylomeDB" id="Q6N4U9"/>
<dbReference type="GO" id="GO:0022625">
    <property type="term" value="C:cytosolic large ribosomal subunit"/>
    <property type="evidence" value="ECO:0007669"/>
    <property type="project" value="TreeGrafter"/>
</dbReference>
<dbReference type="GO" id="GO:0008097">
    <property type="term" value="F:5S rRNA binding"/>
    <property type="evidence" value="ECO:0007669"/>
    <property type="project" value="TreeGrafter"/>
</dbReference>
<dbReference type="GO" id="GO:0003735">
    <property type="term" value="F:structural constituent of ribosome"/>
    <property type="evidence" value="ECO:0007669"/>
    <property type="project" value="InterPro"/>
</dbReference>
<dbReference type="GO" id="GO:0006412">
    <property type="term" value="P:translation"/>
    <property type="evidence" value="ECO:0007669"/>
    <property type="project" value="UniProtKB-UniRule"/>
</dbReference>
<dbReference type="CDD" id="cd00432">
    <property type="entry name" value="Ribosomal_L18_L5e"/>
    <property type="match status" value="1"/>
</dbReference>
<dbReference type="FunFam" id="3.30.420.100:FF:000001">
    <property type="entry name" value="50S ribosomal protein L18"/>
    <property type="match status" value="1"/>
</dbReference>
<dbReference type="Gene3D" id="3.30.420.100">
    <property type="match status" value="1"/>
</dbReference>
<dbReference type="HAMAP" id="MF_01337_B">
    <property type="entry name" value="Ribosomal_uL18_B"/>
    <property type="match status" value="1"/>
</dbReference>
<dbReference type="InterPro" id="IPR004389">
    <property type="entry name" value="Ribosomal_uL18_bac-type"/>
</dbReference>
<dbReference type="InterPro" id="IPR005484">
    <property type="entry name" value="Ribosomal_uL18_bac/euk"/>
</dbReference>
<dbReference type="NCBIfam" id="TIGR00060">
    <property type="entry name" value="L18_bact"/>
    <property type="match status" value="1"/>
</dbReference>
<dbReference type="PANTHER" id="PTHR12899">
    <property type="entry name" value="39S RIBOSOMAL PROTEIN L18, MITOCHONDRIAL"/>
    <property type="match status" value="1"/>
</dbReference>
<dbReference type="PANTHER" id="PTHR12899:SF3">
    <property type="entry name" value="LARGE RIBOSOMAL SUBUNIT PROTEIN UL18M"/>
    <property type="match status" value="1"/>
</dbReference>
<dbReference type="Pfam" id="PF00861">
    <property type="entry name" value="Ribosomal_L18p"/>
    <property type="match status" value="1"/>
</dbReference>
<dbReference type="SUPFAM" id="SSF53137">
    <property type="entry name" value="Translational machinery components"/>
    <property type="match status" value="1"/>
</dbReference>
<sequence>MSKMKITNARRTNRVRTALRRTANGRPRLSVFRSSKHIYAQVIDDAKGETLASASSLEKTMRDAGNTGANIDAAKAVGKLVAERAVEKGVKEVVFDRGGYLYHGRVKALADAARESGLSF</sequence>
<proteinExistence type="evidence at protein level"/>
<feature type="initiator methionine" description="Removed">
    <location>
        <position position="1"/>
    </location>
</feature>
<feature type="chain" id="PRO_0000131329" description="Large ribosomal subunit protein uL18">
    <location>
        <begin position="2"/>
        <end position="120"/>
    </location>
</feature>
<evidence type="ECO:0000255" key="1">
    <source>
        <dbReference type="HAMAP-Rule" id="MF_01337"/>
    </source>
</evidence>
<evidence type="ECO:0000269" key="2">
    <source>
    </source>
</evidence>
<evidence type="ECO:0000305" key="3"/>
<gene>
    <name evidence="1" type="primary">rplR</name>
    <name type="ordered locus">RPA3234</name>
</gene>
<accession>Q6N4U9</accession>
<comment type="function">
    <text evidence="1">This is one of the proteins that bind and probably mediate the attachment of the 5S RNA into the large ribosomal subunit, where it forms part of the central protuberance.</text>
</comment>
<comment type="subunit">
    <text evidence="1">Part of the 50S ribosomal subunit; part of the 5S rRNA/L5/L18/L25 subcomplex. Contacts the 5S and 23S rRNAs.</text>
</comment>
<comment type="mass spectrometry"/>
<comment type="similarity">
    <text evidence="1">Belongs to the universal ribosomal protein uL18 family.</text>
</comment>
<reference key="1">
    <citation type="journal article" date="2004" name="Nat. Biotechnol.">
        <title>Complete genome sequence of the metabolically versatile photosynthetic bacterium Rhodopseudomonas palustris.</title>
        <authorList>
            <person name="Larimer F.W."/>
            <person name="Chain P."/>
            <person name="Hauser L."/>
            <person name="Lamerdin J.E."/>
            <person name="Malfatti S."/>
            <person name="Do L."/>
            <person name="Land M.L."/>
            <person name="Pelletier D.A."/>
            <person name="Beatty J.T."/>
            <person name="Lang A.S."/>
            <person name="Tabita F.R."/>
            <person name="Gibson J.L."/>
            <person name="Hanson T.E."/>
            <person name="Bobst C."/>
            <person name="Torres y Torres J.L."/>
            <person name="Peres C."/>
            <person name="Harrison F.H."/>
            <person name="Gibson J."/>
            <person name="Harwood C.S."/>
        </authorList>
    </citation>
    <scope>NUCLEOTIDE SEQUENCE [LARGE SCALE GENOMIC DNA]</scope>
    <source>
        <strain>ATCC BAA-98 / CGA009</strain>
    </source>
</reference>
<reference key="2">
    <citation type="journal article" date="2004" name="J. Proteome Res.">
        <title>Characterization of the 70S ribosome from Rhodopseudomonas palustris using an integrated 'top-down' and 'bottom-up' mass spectrometric approach.</title>
        <authorList>
            <person name="Strader M.B."/>
            <person name="VerBerkmoes N.C."/>
            <person name="Tabb D.L."/>
            <person name="Connelly H.M."/>
            <person name="Barton J.W."/>
            <person name="Bruce B.D."/>
            <person name="Pelletier D.A."/>
            <person name="Davison B.H."/>
            <person name="Hettich R.L."/>
            <person name="Larimer F.W."/>
            <person name="Hurst G.B."/>
        </authorList>
    </citation>
    <scope>MASS SPECTROMETRY</scope>
    <source>
        <strain>ATCC BAA-98 / CGA009</strain>
    </source>
</reference>
<keyword id="KW-0687">Ribonucleoprotein</keyword>
<keyword id="KW-0689">Ribosomal protein</keyword>
<keyword id="KW-0694">RNA-binding</keyword>
<keyword id="KW-0699">rRNA-binding</keyword>
<protein>
    <recommendedName>
        <fullName evidence="1">Large ribosomal subunit protein uL18</fullName>
    </recommendedName>
    <alternativeName>
        <fullName evidence="3">50S ribosomal protein L18</fullName>
    </alternativeName>
    <alternativeName>
        <fullName>RRP-L18</fullName>
    </alternativeName>
</protein>
<organism>
    <name type="scientific">Rhodopseudomonas palustris (strain ATCC BAA-98 / CGA009)</name>
    <dbReference type="NCBI Taxonomy" id="258594"/>
    <lineage>
        <taxon>Bacteria</taxon>
        <taxon>Pseudomonadati</taxon>
        <taxon>Pseudomonadota</taxon>
        <taxon>Alphaproteobacteria</taxon>
        <taxon>Hyphomicrobiales</taxon>
        <taxon>Nitrobacteraceae</taxon>
        <taxon>Rhodopseudomonas</taxon>
    </lineage>
</organism>